<reference key="1">
    <citation type="journal article" date="2001" name="Adv. Exp. Med. Biol.">
        <title>Full-length genomic sequence of bovine coronavirus (31 kb). Completion of the open reading frame 1a/1b sequences.</title>
        <authorList>
            <person name="Yoo D."/>
            <person name="Pei Y."/>
        </authorList>
    </citation>
    <scope>NUCLEOTIDE SEQUENCE [GENOMIC RNA]</scope>
</reference>
<reference key="2">
    <citation type="journal article" date="2001" name="Virus Res.">
        <title>Bovine coronaviruses associated with enteric and respiratory diseases in Canadian dairy cattle display different reactivities to anti-HE monoclonal antibodies and distinct amino acid changes in their HE, S and ns4.9 protein.</title>
        <authorList>
            <person name="Gelinas A.-M."/>
            <person name="Boutin M."/>
            <person name="Sasseville A.M.-J."/>
            <person name="Dea S."/>
        </authorList>
    </citation>
    <scope>NUCLEOTIDE SEQUENCE [GENOMIC RNA]</scope>
    <source>
        <strain>Isolate BCQ.1523</strain>
        <strain>Isolate BCQ.2590</strain>
        <strain>Isolate BCQ.3994</strain>
        <strain>Isolate BCQ.571</strain>
        <strain>Isolate BCQ.7373</strain>
    </source>
</reference>
<name>VEMP_CVBQ</name>
<gene>
    <name evidence="1" type="primary">E</name>
    <name type="synonym">sM</name>
    <name type="ORF">5b</name>
</gene>
<organismHost>
    <name type="scientific">Bos taurus</name>
    <name type="common">Bovine</name>
    <dbReference type="NCBI Taxonomy" id="9913"/>
</organismHost>
<evidence type="ECO:0000255" key="1">
    <source>
        <dbReference type="HAMAP-Rule" id="MF_04204"/>
    </source>
</evidence>
<protein>
    <recommendedName>
        <fullName evidence="1">Envelope small membrane protein</fullName>
        <shortName evidence="1">E protein</shortName>
        <shortName evidence="1">sM protein</shortName>
    </recommendedName>
</protein>
<feature type="chain" id="PRO_0000283973" description="Envelope small membrane protein">
    <location>
        <begin position="1"/>
        <end position="84"/>
    </location>
</feature>
<feature type="topological domain" description="Virion surface" evidence="1">
    <location>
        <begin position="1"/>
        <end position="18"/>
    </location>
</feature>
<feature type="transmembrane region" description="Helical" evidence="1">
    <location>
        <begin position="19"/>
        <end position="39"/>
    </location>
</feature>
<feature type="topological domain" description="Intravirion" evidence="1">
    <location>
        <begin position="40"/>
        <end position="80"/>
    </location>
</feature>
<keyword id="KW-0053">Apoptosis</keyword>
<keyword id="KW-1040">Host Golgi apparatus</keyword>
<keyword id="KW-1043">Host membrane</keyword>
<keyword id="KW-0472">Membrane</keyword>
<keyword id="KW-0812">Transmembrane</keyword>
<keyword id="KW-1133">Transmembrane helix</keyword>
<sequence length="84" mass="9584">MFMADAYFADTVWYVGQIIFIVAICLLVIIVVVAFLATFKLCIQLCGMCNTLVLSPSIYVFNRGRQFYEFYNDVKPPVLDVDDV</sequence>
<proteinExistence type="inferred from homology"/>
<organism>
    <name type="scientific">Bovine coronavirus (strain Quebec)</name>
    <name type="common">BCoV</name>
    <name type="synonym">BCV</name>
    <dbReference type="NCBI Taxonomy" id="11133"/>
    <lineage>
        <taxon>Viruses</taxon>
        <taxon>Riboviria</taxon>
        <taxon>Orthornavirae</taxon>
        <taxon>Pisuviricota</taxon>
        <taxon>Pisoniviricetes</taxon>
        <taxon>Nidovirales</taxon>
        <taxon>Cornidovirineae</taxon>
        <taxon>Coronaviridae</taxon>
        <taxon>Orthocoronavirinae</taxon>
        <taxon>Betacoronavirus</taxon>
        <taxon>Embecovirus</taxon>
        <taxon>Betacoronavirus 1</taxon>
    </lineage>
</organism>
<comment type="function">
    <text evidence="1">Plays a central role in virus morphogenesis and assembly. Acts as a viroporin and self-assembles in host membranes forming pentameric protein-lipid pores that allow ion transport. Also plays a role in the induction of apoptosis.</text>
</comment>
<comment type="subunit">
    <text evidence="1">Homopentamer. Interacts with membrane protein M in the budding compartment of the host cell, which is located between endoplasmic reticulum and the Golgi complex. Interacts with Nucleoprotein.</text>
</comment>
<comment type="subcellular location">
    <subcellularLocation>
        <location evidence="1">Host Golgi apparatus membrane</location>
        <topology evidence="1">Single-pass type III membrane protein</topology>
    </subcellularLocation>
    <text evidence="1">The cytoplasmic tail functions as a Golgi complex-targeting signal.</text>
</comment>
<comment type="similarity">
    <text evidence="1">Belongs to the betacoronaviruses E protein family.</text>
</comment>
<dbReference type="EMBL" id="AF220295">
    <property type="protein sequence ID" value="AAL40404.1"/>
    <property type="molecule type" value="Genomic_RNA"/>
</dbReference>
<dbReference type="EMBL" id="AF239312">
    <property type="protein sequence ID" value="AAG40609.1"/>
    <property type="molecule type" value="Genomic_RNA"/>
</dbReference>
<dbReference type="EMBL" id="AH010256">
    <property type="protein sequence ID" value="AAK01075.1"/>
    <property type="molecule type" value="Genomic_RNA"/>
</dbReference>
<dbReference type="EMBL" id="AH010061">
    <property type="protein sequence ID" value="AAG40599.1"/>
    <property type="molecule type" value="Genomic_RNA"/>
</dbReference>
<dbReference type="EMBL" id="AH010363">
    <property type="protein sequence ID" value="AAK01079.1"/>
    <property type="molecule type" value="Genomic_RNA"/>
</dbReference>
<dbReference type="EMBL" id="AH010062">
    <property type="protein sequence ID" value="AAG40605.1"/>
    <property type="molecule type" value="Genomic_RNA"/>
</dbReference>
<dbReference type="RefSeq" id="NP_150081.1">
    <property type="nucleotide sequence ID" value="NC_003045.1"/>
</dbReference>
<dbReference type="GeneID" id="921685"/>
<dbReference type="KEGG" id="vg:921685"/>
<dbReference type="Proteomes" id="UP000008572">
    <property type="component" value="Genome"/>
</dbReference>
<dbReference type="GO" id="GO:0044178">
    <property type="term" value="C:host cell Golgi membrane"/>
    <property type="evidence" value="ECO:0007669"/>
    <property type="project" value="UniProtKB-SubCell"/>
</dbReference>
<dbReference type="GO" id="GO:0016020">
    <property type="term" value="C:membrane"/>
    <property type="evidence" value="ECO:0007669"/>
    <property type="project" value="UniProtKB-UniRule"/>
</dbReference>
<dbReference type="GO" id="GO:0140975">
    <property type="term" value="P:disruption of cellular anatomical structure in another organism"/>
    <property type="evidence" value="ECO:0007669"/>
    <property type="project" value="UniProtKB-UniRule"/>
</dbReference>
<dbReference type="GO" id="GO:0046760">
    <property type="term" value="P:viral budding from Golgi membrane"/>
    <property type="evidence" value="ECO:0007669"/>
    <property type="project" value="UniProtKB-UniRule"/>
</dbReference>
<dbReference type="CDD" id="cd21532">
    <property type="entry name" value="HKU1-CoV-like_E"/>
    <property type="match status" value="1"/>
</dbReference>
<dbReference type="HAMAP" id="MF_04204">
    <property type="entry name" value="BETA_CORONA_E"/>
    <property type="match status" value="1"/>
</dbReference>
<dbReference type="InterPro" id="IPR043506">
    <property type="entry name" value="E_protein_bCoV"/>
</dbReference>
<dbReference type="InterPro" id="IPR003873">
    <property type="entry name" value="E_protein_CoV"/>
</dbReference>
<dbReference type="Pfam" id="PF02723">
    <property type="entry name" value="CoV_E"/>
    <property type="match status" value="1"/>
</dbReference>
<dbReference type="PROSITE" id="PS51926">
    <property type="entry name" value="COV_E"/>
    <property type="match status" value="1"/>
</dbReference>
<accession>P0C2Q7</accession>
<accession>Q77MZ5</accession>
<accession>Q77WX9</accession>